<gene>
    <name type="primary">ACT2</name>
</gene>
<keyword id="KW-0067">ATP-binding</keyword>
<keyword id="KW-0963">Cytoplasm</keyword>
<keyword id="KW-0206">Cytoskeleton</keyword>
<keyword id="KW-0378">Hydrolase</keyword>
<keyword id="KW-0547">Nucleotide-binding</keyword>
<name>ACT2_ABSGL</name>
<accession>P26197</accession>
<comment type="function">
    <text>Actins are highly conserved proteins that are involved in various types of cell motility and are ubiquitously expressed in all eukaryotic cells.</text>
</comment>
<comment type="catalytic activity">
    <reaction evidence="1">
        <text>ATP + H2O = ADP + phosphate + H(+)</text>
        <dbReference type="Rhea" id="RHEA:13065"/>
        <dbReference type="ChEBI" id="CHEBI:15377"/>
        <dbReference type="ChEBI" id="CHEBI:15378"/>
        <dbReference type="ChEBI" id="CHEBI:30616"/>
        <dbReference type="ChEBI" id="CHEBI:43474"/>
        <dbReference type="ChEBI" id="CHEBI:456216"/>
    </reaction>
</comment>
<comment type="subcellular location">
    <subcellularLocation>
        <location>Cytoplasm</location>
        <location>Cytoskeleton</location>
    </subcellularLocation>
</comment>
<comment type="similarity">
    <text evidence="2">Belongs to the actin family.</text>
</comment>
<feature type="chain" id="PRO_0000088883" description="Actin-2">
    <location>
        <begin position="1"/>
        <end position="377"/>
    </location>
</feature>
<proteinExistence type="inferred from homology"/>
<reference key="1">
    <citation type="submission" date="1991-05" db="EMBL/GenBank/DDBJ databases">
        <title>On the molecular organization of the ACT1 and ACT2 genes encoding actin in A (+) and (-) mating type strain pair of the zygomycete Absidia glauca.</title>
        <authorList>
            <person name="Haenfler J."/>
            <person name="Weigel C."/>
        </authorList>
    </citation>
    <scope>NUCLEOTIDE SEQUENCE [GENOMIC DNA]</scope>
</reference>
<protein>
    <recommendedName>
        <fullName>Actin-2</fullName>
        <ecNumber evidence="1">3.6.4.-</ecNumber>
    </recommendedName>
</protein>
<organism>
    <name type="scientific">Absidia glauca</name>
    <name type="common">Pin mould</name>
    <dbReference type="NCBI Taxonomy" id="4829"/>
    <lineage>
        <taxon>Eukaryota</taxon>
        <taxon>Fungi</taxon>
        <taxon>Fungi incertae sedis</taxon>
        <taxon>Mucoromycota</taxon>
        <taxon>Mucoromycotina</taxon>
        <taxon>Mucoromycetes</taxon>
        <taxon>Mucorales</taxon>
        <taxon>Cunninghamellaceae</taxon>
        <taxon>Absidia</taxon>
    </lineage>
</organism>
<dbReference type="EC" id="3.6.4.-" evidence="1"/>
<dbReference type="EMBL" id="M64729">
    <property type="protein sequence ID" value="AAA32619.1"/>
    <property type="molecule type" value="Genomic_DNA"/>
</dbReference>
<dbReference type="SMR" id="P26197"/>
<dbReference type="GO" id="GO:0005737">
    <property type="term" value="C:cytoplasm"/>
    <property type="evidence" value="ECO:0007669"/>
    <property type="project" value="UniProtKB-KW"/>
</dbReference>
<dbReference type="GO" id="GO:0005856">
    <property type="term" value="C:cytoskeleton"/>
    <property type="evidence" value="ECO:0007669"/>
    <property type="project" value="UniProtKB-SubCell"/>
</dbReference>
<dbReference type="GO" id="GO:0005524">
    <property type="term" value="F:ATP binding"/>
    <property type="evidence" value="ECO:0007669"/>
    <property type="project" value="UniProtKB-KW"/>
</dbReference>
<dbReference type="GO" id="GO:0016787">
    <property type="term" value="F:hydrolase activity"/>
    <property type="evidence" value="ECO:0007669"/>
    <property type="project" value="UniProtKB-KW"/>
</dbReference>
<dbReference type="CDD" id="cd10224">
    <property type="entry name" value="ASKHA_NBD_actin"/>
    <property type="match status" value="1"/>
</dbReference>
<dbReference type="FunFam" id="2.30.36.70:FF:000001">
    <property type="entry name" value="Actin, alpha skeletal muscle"/>
    <property type="match status" value="1"/>
</dbReference>
<dbReference type="FunFam" id="3.30.420.40:FF:000131">
    <property type="entry name" value="Actin, alpha skeletal muscle"/>
    <property type="match status" value="1"/>
</dbReference>
<dbReference type="FunFam" id="3.30.420.40:FF:000291">
    <property type="entry name" value="Actin, alpha skeletal muscle"/>
    <property type="match status" value="1"/>
</dbReference>
<dbReference type="FunFam" id="3.90.640.10:FF:000047">
    <property type="entry name" value="Actin, alpha skeletal muscle"/>
    <property type="match status" value="1"/>
</dbReference>
<dbReference type="FunFam" id="3.30.420.40:FF:000058">
    <property type="entry name" value="Putative actin-related protein 5"/>
    <property type="match status" value="1"/>
</dbReference>
<dbReference type="Gene3D" id="3.30.420.40">
    <property type="match status" value="2"/>
</dbReference>
<dbReference type="Gene3D" id="3.90.640.10">
    <property type="entry name" value="Actin, Chain A, domain 4"/>
    <property type="match status" value="1"/>
</dbReference>
<dbReference type="InterPro" id="IPR004000">
    <property type="entry name" value="Actin"/>
</dbReference>
<dbReference type="InterPro" id="IPR020902">
    <property type="entry name" value="Actin/actin-like_CS"/>
</dbReference>
<dbReference type="InterPro" id="IPR004001">
    <property type="entry name" value="Actin_CS"/>
</dbReference>
<dbReference type="InterPro" id="IPR043129">
    <property type="entry name" value="ATPase_NBD"/>
</dbReference>
<dbReference type="PANTHER" id="PTHR11937">
    <property type="entry name" value="ACTIN"/>
    <property type="match status" value="1"/>
</dbReference>
<dbReference type="Pfam" id="PF00022">
    <property type="entry name" value="Actin"/>
    <property type="match status" value="1"/>
</dbReference>
<dbReference type="PRINTS" id="PR00190">
    <property type="entry name" value="ACTIN"/>
</dbReference>
<dbReference type="SMART" id="SM00268">
    <property type="entry name" value="ACTIN"/>
    <property type="match status" value="1"/>
</dbReference>
<dbReference type="SUPFAM" id="SSF53067">
    <property type="entry name" value="Actin-like ATPase domain"/>
    <property type="match status" value="2"/>
</dbReference>
<dbReference type="PROSITE" id="PS00406">
    <property type="entry name" value="ACTINS_1"/>
    <property type="match status" value="1"/>
</dbReference>
<dbReference type="PROSITE" id="PS00432">
    <property type="entry name" value="ACTINS_2"/>
    <property type="match status" value="1"/>
</dbReference>
<dbReference type="PROSITE" id="PS01132">
    <property type="entry name" value="ACTINS_ACT_LIKE"/>
    <property type="match status" value="1"/>
</dbReference>
<sequence>MSMEEDIAALVIDNASGMCKAGFAGDDAPRAVFPSIVGRPRHQGIMVGMGQKDSYVGDEAQSKRGILTLRYPIEHGIVTNWDDMEKIWHHTFYNELRVAPEEHPVLLTEAPLNPKSNREKMTQIMFETFNAPAFYVSIQAVLSLYASGRTTGIVLDSGDGVTHTVPIYEGYSLPHAILRLDMAGRDLTDYLMRILAERGHSFTTTAEREIVRDIKEKLCYTGLDFEQEMQTAAQSSALEKSYELPDGQVITVGNERFRAPEALFQPSFLGLESAGIHETTYNSIMKCDVDIRKDLYSNIVMSGGTTMYPGIADRMQKEITALAPSSMKIKIVAPPERKYSVWIGGSILASLSTFQQMWISKQEYDESGPSIVHRKCF</sequence>
<evidence type="ECO:0000250" key="1">
    <source>
        <dbReference type="UniProtKB" id="P60010"/>
    </source>
</evidence>
<evidence type="ECO:0000305" key="2"/>